<name>RL18_PARS2</name>
<feature type="chain" id="PRO_1000142668" description="Large ribosomal subunit protein uL18">
    <location>
        <begin position="1"/>
        <end position="124"/>
    </location>
</feature>
<proteinExistence type="inferred from homology"/>
<accession>A8LC40</accession>
<comment type="function">
    <text evidence="1">This is one of the proteins that bind and probably mediate the attachment of the 5S RNA into the large ribosomal subunit, where it forms part of the central protuberance.</text>
</comment>
<comment type="subunit">
    <text evidence="1">Part of the 50S ribosomal subunit; part of the 5S rRNA/L5/L18/L25 subcomplex. Contacts the 5S and 23S rRNAs.</text>
</comment>
<comment type="similarity">
    <text evidence="1">Belongs to the universal ribosomal protein uL18 family.</text>
</comment>
<reference key="1">
    <citation type="journal article" date="2007" name="Genome Res.">
        <title>Genome characteristics of facultatively symbiotic Frankia sp. strains reflect host range and host plant biogeography.</title>
        <authorList>
            <person name="Normand P."/>
            <person name="Lapierre P."/>
            <person name="Tisa L.S."/>
            <person name="Gogarten J.P."/>
            <person name="Alloisio N."/>
            <person name="Bagnarol E."/>
            <person name="Bassi C.A."/>
            <person name="Berry A.M."/>
            <person name="Bickhart D.M."/>
            <person name="Choisne N."/>
            <person name="Couloux A."/>
            <person name="Cournoyer B."/>
            <person name="Cruveiller S."/>
            <person name="Daubin V."/>
            <person name="Demange N."/>
            <person name="Francino M.P."/>
            <person name="Goltsman E."/>
            <person name="Huang Y."/>
            <person name="Kopp O.R."/>
            <person name="Labarre L."/>
            <person name="Lapidus A."/>
            <person name="Lavire C."/>
            <person name="Marechal J."/>
            <person name="Martinez M."/>
            <person name="Mastronunzio J.E."/>
            <person name="Mullin B.C."/>
            <person name="Niemann J."/>
            <person name="Pujic P."/>
            <person name="Rawnsley T."/>
            <person name="Rouy Z."/>
            <person name="Schenowitz C."/>
            <person name="Sellstedt A."/>
            <person name="Tavares F."/>
            <person name="Tomkins J.P."/>
            <person name="Vallenet D."/>
            <person name="Valverde C."/>
            <person name="Wall L.G."/>
            <person name="Wang Y."/>
            <person name="Medigue C."/>
            <person name="Benson D.R."/>
        </authorList>
    </citation>
    <scope>NUCLEOTIDE SEQUENCE [LARGE SCALE GENOMIC DNA]</scope>
    <source>
        <strain>EAN1pec</strain>
    </source>
</reference>
<sequence length="124" mass="13328">MAVSLSASARRRTAKLRRHVRVRKKVSGTPIRPRLVVTRSSRHIYAQVIDDVAGHTLASASTLEDGLRASDGDKSAKAREVGRLVAERARAAGIDAVVFDRGGRTYHGRIAALADAAREGGLNF</sequence>
<protein>
    <recommendedName>
        <fullName evidence="1">Large ribosomal subunit protein uL18</fullName>
    </recommendedName>
    <alternativeName>
        <fullName evidence="2">50S ribosomal protein L18</fullName>
    </alternativeName>
</protein>
<evidence type="ECO:0000255" key="1">
    <source>
        <dbReference type="HAMAP-Rule" id="MF_01337"/>
    </source>
</evidence>
<evidence type="ECO:0000305" key="2"/>
<keyword id="KW-0687">Ribonucleoprotein</keyword>
<keyword id="KW-0689">Ribosomal protein</keyword>
<keyword id="KW-0694">RNA-binding</keyword>
<keyword id="KW-0699">rRNA-binding</keyword>
<gene>
    <name evidence="1" type="primary">rplR</name>
    <name type="ordered locus">Franean1_6033</name>
</gene>
<dbReference type="EMBL" id="CP000820">
    <property type="protein sequence ID" value="ABW15377.1"/>
    <property type="molecule type" value="Genomic_DNA"/>
</dbReference>
<dbReference type="RefSeq" id="WP_020463469.1">
    <property type="nucleotide sequence ID" value="NC_009921.1"/>
</dbReference>
<dbReference type="SMR" id="A8LC40"/>
<dbReference type="STRING" id="298653.Franean1_6033"/>
<dbReference type="KEGG" id="fre:Franean1_6033"/>
<dbReference type="eggNOG" id="COG0256">
    <property type="taxonomic scope" value="Bacteria"/>
</dbReference>
<dbReference type="HOGENOM" id="CLU_098841_0_1_11"/>
<dbReference type="GO" id="GO:0022625">
    <property type="term" value="C:cytosolic large ribosomal subunit"/>
    <property type="evidence" value="ECO:0007669"/>
    <property type="project" value="TreeGrafter"/>
</dbReference>
<dbReference type="GO" id="GO:0008097">
    <property type="term" value="F:5S rRNA binding"/>
    <property type="evidence" value="ECO:0007669"/>
    <property type="project" value="TreeGrafter"/>
</dbReference>
<dbReference type="GO" id="GO:0003735">
    <property type="term" value="F:structural constituent of ribosome"/>
    <property type="evidence" value="ECO:0007669"/>
    <property type="project" value="InterPro"/>
</dbReference>
<dbReference type="GO" id="GO:0006412">
    <property type="term" value="P:translation"/>
    <property type="evidence" value="ECO:0007669"/>
    <property type="project" value="UniProtKB-UniRule"/>
</dbReference>
<dbReference type="CDD" id="cd00432">
    <property type="entry name" value="Ribosomal_L18_L5e"/>
    <property type="match status" value="1"/>
</dbReference>
<dbReference type="FunFam" id="3.30.420.100:FF:000001">
    <property type="entry name" value="50S ribosomal protein L18"/>
    <property type="match status" value="1"/>
</dbReference>
<dbReference type="Gene3D" id="3.30.420.100">
    <property type="match status" value="1"/>
</dbReference>
<dbReference type="HAMAP" id="MF_01337_B">
    <property type="entry name" value="Ribosomal_uL18_B"/>
    <property type="match status" value="1"/>
</dbReference>
<dbReference type="InterPro" id="IPR004389">
    <property type="entry name" value="Ribosomal_uL18_bac-type"/>
</dbReference>
<dbReference type="InterPro" id="IPR005484">
    <property type="entry name" value="Ribosomal_uL18_bac/euk"/>
</dbReference>
<dbReference type="NCBIfam" id="TIGR00060">
    <property type="entry name" value="L18_bact"/>
    <property type="match status" value="1"/>
</dbReference>
<dbReference type="PANTHER" id="PTHR12899">
    <property type="entry name" value="39S RIBOSOMAL PROTEIN L18, MITOCHONDRIAL"/>
    <property type="match status" value="1"/>
</dbReference>
<dbReference type="PANTHER" id="PTHR12899:SF3">
    <property type="entry name" value="LARGE RIBOSOMAL SUBUNIT PROTEIN UL18M"/>
    <property type="match status" value="1"/>
</dbReference>
<dbReference type="Pfam" id="PF00861">
    <property type="entry name" value="Ribosomal_L18p"/>
    <property type="match status" value="1"/>
</dbReference>
<dbReference type="SUPFAM" id="SSF53137">
    <property type="entry name" value="Translational machinery components"/>
    <property type="match status" value="1"/>
</dbReference>
<organism>
    <name type="scientific">Parafrankia sp. (strain EAN1pec)</name>
    <dbReference type="NCBI Taxonomy" id="298653"/>
    <lineage>
        <taxon>Bacteria</taxon>
        <taxon>Bacillati</taxon>
        <taxon>Actinomycetota</taxon>
        <taxon>Actinomycetes</taxon>
        <taxon>Frankiales</taxon>
        <taxon>Frankiaceae</taxon>
        <taxon>Parafrankia</taxon>
    </lineage>
</organism>